<reference key="1">
    <citation type="journal article" date="2010" name="Environ. Microbiol.">
        <title>The genome of Syntrophomonas wolfei: new insights into syntrophic metabolism and biohydrogen production.</title>
        <authorList>
            <person name="Sieber J.R."/>
            <person name="Sims D.R."/>
            <person name="Han C."/>
            <person name="Kim E."/>
            <person name="Lykidis A."/>
            <person name="Lapidus A.L."/>
            <person name="McDonnald E."/>
            <person name="Rohlin L."/>
            <person name="Culley D.E."/>
            <person name="Gunsalus R."/>
            <person name="McInerney M.J."/>
        </authorList>
    </citation>
    <scope>NUCLEOTIDE SEQUENCE [LARGE SCALE GENOMIC DNA]</scope>
    <source>
        <strain>DSM 2245B / Goettingen</strain>
    </source>
</reference>
<organism>
    <name type="scientific">Syntrophomonas wolfei subsp. wolfei (strain DSM 2245B / Goettingen)</name>
    <dbReference type="NCBI Taxonomy" id="335541"/>
    <lineage>
        <taxon>Bacteria</taxon>
        <taxon>Bacillati</taxon>
        <taxon>Bacillota</taxon>
        <taxon>Clostridia</taxon>
        <taxon>Eubacteriales</taxon>
        <taxon>Syntrophomonadaceae</taxon>
        <taxon>Syntrophomonas</taxon>
    </lineage>
</organism>
<proteinExistence type="inferred from homology"/>
<protein>
    <recommendedName>
        <fullName evidence="1">Small ribosomal subunit protein bS21</fullName>
    </recommendedName>
    <alternativeName>
        <fullName evidence="3">30S ribosomal protein S21</fullName>
    </alternativeName>
</protein>
<sequence>MSEVKVGKNESLDSALKRFKRSCQKAGVLQDIRKHEHYEKPSIKKKKKSEAARKKKRF</sequence>
<feature type="chain" id="PRO_0000266790" description="Small ribosomal subunit protein bS21">
    <location>
        <begin position="1"/>
        <end position="58"/>
    </location>
</feature>
<feature type="region of interest" description="Disordered" evidence="2">
    <location>
        <begin position="28"/>
        <end position="58"/>
    </location>
</feature>
<feature type="compositionally biased region" description="Basic and acidic residues" evidence="2">
    <location>
        <begin position="31"/>
        <end position="42"/>
    </location>
</feature>
<feature type="compositionally biased region" description="Basic residues" evidence="2">
    <location>
        <begin position="43"/>
        <end position="58"/>
    </location>
</feature>
<dbReference type="EMBL" id="CP000448">
    <property type="protein sequence ID" value="ABI68876.1"/>
    <property type="molecule type" value="Genomic_DNA"/>
</dbReference>
<dbReference type="RefSeq" id="WP_011640975.1">
    <property type="nucleotide sequence ID" value="NC_008346.1"/>
</dbReference>
<dbReference type="SMR" id="Q0AWM8"/>
<dbReference type="STRING" id="335541.Swol_1573"/>
<dbReference type="KEGG" id="swo:Swol_1573"/>
<dbReference type="eggNOG" id="COG0828">
    <property type="taxonomic scope" value="Bacteria"/>
</dbReference>
<dbReference type="HOGENOM" id="CLU_159258_3_2_9"/>
<dbReference type="OrthoDB" id="9799244at2"/>
<dbReference type="Proteomes" id="UP000001968">
    <property type="component" value="Chromosome"/>
</dbReference>
<dbReference type="GO" id="GO:1990904">
    <property type="term" value="C:ribonucleoprotein complex"/>
    <property type="evidence" value="ECO:0007669"/>
    <property type="project" value="UniProtKB-KW"/>
</dbReference>
<dbReference type="GO" id="GO:0005840">
    <property type="term" value="C:ribosome"/>
    <property type="evidence" value="ECO:0007669"/>
    <property type="project" value="UniProtKB-KW"/>
</dbReference>
<dbReference type="GO" id="GO:0003735">
    <property type="term" value="F:structural constituent of ribosome"/>
    <property type="evidence" value="ECO:0007669"/>
    <property type="project" value="InterPro"/>
</dbReference>
<dbReference type="GO" id="GO:0006412">
    <property type="term" value="P:translation"/>
    <property type="evidence" value="ECO:0007669"/>
    <property type="project" value="UniProtKB-UniRule"/>
</dbReference>
<dbReference type="Gene3D" id="1.20.5.1150">
    <property type="entry name" value="Ribosomal protein S8"/>
    <property type="match status" value="1"/>
</dbReference>
<dbReference type="HAMAP" id="MF_00358">
    <property type="entry name" value="Ribosomal_bS21"/>
    <property type="match status" value="1"/>
</dbReference>
<dbReference type="InterPro" id="IPR001911">
    <property type="entry name" value="Ribosomal_bS21"/>
</dbReference>
<dbReference type="InterPro" id="IPR018278">
    <property type="entry name" value="Ribosomal_bS21_CS"/>
</dbReference>
<dbReference type="InterPro" id="IPR038380">
    <property type="entry name" value="Ribosomal_bS21_sf"/>
</dbReference>
<dbReference type="NCBIfam" id="TIGR00030">
    <property type="entry name" value="S21p"/>
    <property type="match status" value="1"/>
</dbReference>
<dbReference type="PANTHER" id="PTHR21109">
    <property type="entry name" value="MITOCHONDRIAL 28S RIBOSOMAL PROTEIN S21"/>
    <property type="match status" value="1"/>
</dbReference>
<dbReference type="PANTHER" id="PTHR21109:SF22">
    <property type="entry name" value="SMALL RIBOSOMAL SUBUNIT PROTEIN BS21"/>
    <property type="match status" value="1"/>
</dbReference>
<dbReference type="Pfam" id="PF01165">
    <property type="entry name" value="Ribosomal_S21"/>
    <property type="match status" value="1"/>
</dbReference>
<dbReference type="PRINTS" id="PR00976">
    <property type="entry name" value="RIBOSOMALS21"/>
</dbReference>
<dbReference type="PROSITE" id="PS01181">
    <property type="entry name" value="RIBOSOMAL_S21"/>
    <property type="match status" value="1"/>
</dbReference>
<gene>
    <name evidence="1" type="primary">rpsU</name>
    <name type="ordered locus">Swol_1573</name>
</gene>
<evidence type="ECO:0000255" key="1">
    <source>
        <dbReference type="HAMAP-Rule" id="MF_00358"/>
    </source>
</evidence>
<evidence type="ECO:0000256" key="2">
    <source>
        <dbReference type="SAM" id="MobiDB-lite"/>
    </source>
</evidence>
<evidence type="ECO:0000305" key="3"/>
<accession>Q0AWM8</accession>
<name>RS21_SYNWW</name>
<keyword id="KW-1185">Reference proteome</keyword>
<keyword id="KW-0687">Ribonucleoprotein</keyword>
<keyword id="KW-0689">Ribosomal protein</keyword>
<comment type="similarity">
    <text evidence="1">Belongs to the bacterial ribosomal protein bS21 family.</text>
</comment>